<keyword id="KW-0963">Cytoplasm</keyword>
<keyword id="KW-0238">DNA-binding</keyword>
<keyword id="KW-0804">Transcription</keyword>
<keyword id="KW-0805">Transcription regulation</keyword>
<name>Y1532_YERPN</name>
<evidence type="ECO:0000255" key="1">
    <source>
        <dbReference type="HAMAP-Rule" id="MF_00693"/>
    </source>
</evidence>
<reference key="1">
    <citation type="journal article" date="2006" name="J. Bacteriol.">
        <title>Complete genome sequence of Yersinia pestis strains Antiqua and Nepal516: evidence of gene reduction in an emerging pathogen.</title>
        <authorList>
            <person name="Chain P.S.G."/>
            <person name="Hu P."/>
            <person name="Malfatti S.A."/>
            <person name="Radnedge L."/>
            <person name="Larimer F."/>
            <person name="Vergez L.M."/>
            <person name="Worsham P."/>
            <person name="Chu M.C."/>
            <person name="Andersen G.L."/>
        </authorList>
    </citation>
    <scope>NUCLEOTIDE SEQUENCE [LARGE SCALE GENOMIC DNA]</scope>
    <source>
        <strain>Nepal516</strain>
    </source>
</reference>
<reference key="2">
    <citation type="submission" date="2009-04" db="EMBL/GenBank/DDBJ databases">
        <title>Yersinia pestis Nepal516A whole genome shotgun sequencing project.</title>
        <authorList>
            <person name="Plunkett G. III"/>
            <person name="Anderson B.D."/>
            <person name="Baumler D.J."/>
            <person name="Burland V."/>
            <person name="Cabot E.L."/>
            <person name="Glasner J.D."/>
            <person name="Mau B."/>
            <person name="Neeno-Eckwall E."/>
            <person name="Perna N.T."/>
            <person name="Munk A.C."/>
            <person name="Tapia R."/>
            <person name="Green L.D."/>
            <person name="Rogers Y.C."/>
            <person name="Detter J.C."/>
            <person name="Bruce D.C."/>
            <person name="Brettin T.S."/>
        </authorList>
    </citation>
    <scope>NUCLEOTIDE SEQUENCE [LARGE SCALE GENOMIC DNA]</scope>
    <source>
        <strain>Nepal516</strain>
    </source>
</reference>
<comment type="subcellular location">
    <subcellularLocation>
        <location evidence="1">Cytoplasm</location>
    </subcellularLocation>
</comment>
<comment type="similarity">
    <text evidence="1">Belongs to the TACO1 family.</text>
</comment>
<feature type="chain" id="PRO_0000257161" description="Probable transcriptional regulatory protein YPN_1532">
    <location>
        <begin position="1"/>
        <end position="247"/>
    </location>
</feature>
<sequence length="247" mass="26243">MAGHSKWANTKHRKAAQDAKRGKIFTKIIRELVTAARLGGGDPGANPRLRAAIDKALSNNMTRDTLNRAIARGVGGDEDNNMETIIYEGYGPGGTAVMVECLSDNRNRTVSEVRHAFTKTGGNLGTDGSVSYLFTKKGVISYAPGLEEDTVMDAALEAGADDIVVYDDGAIDVFTAWESLGAVKDALDATGLVAEGAEVSLIPSTKAELDAETAPKLLRLIDMLEDSDDVQEVYHNGEISDEVAATL</sequence>
<protein>
    <recommendedName>
        <fullName evidence="1">Probable transcriptional regulatory protein YPN_1532</fullName>
    </recommendedName>
</protein>
<organism>
    <name type="scientific">Yersinia pestis bv. Antiqua (strain Nepal516)</name>
    <dbReference type="NCBI Taxonomy" id="377628"/>
    <lineage>
        <taxon>Bacteria</taxon>
        <taxon>Pseudomonadati</taxon>
        <taxon>Pseudomonadota</taxon>
        <taxon>Gammaproteobacteria</taxon>
        <taxon>Enterobacterales</taxon>
        <taxon>Yersiniaceae</taxon>
        <taxon>Yersinia</taxon>
    </lineage>
</organism>
<dbReference type="EMBL" id="CP000305">
    <property type="protein sequence ID" value="ABG17862.1"/>
    <property type="molecule type" value="Genomic_DNA"/>
</dbReference>
<dbReference type="EMBL" id="ACNQ01000009">
    <property type="protein sequence ID" value="EEO76968.1"/>
    <property type="molecule type" value="Genomic_DNA"/>
</dbReference>
<dbReference type="RefSeq" id="WP_002211202.1">
    <property type="nucleotide sequence ID" value="NZ_ACNQ01000009.1"/>
</dbReference>
<dbReference type="SMR" id="Q1CJG8"/>
<dbReference type="KEGG" id="ypn:YPN_1532"/>
<dbReference type="HOGENOM" id="CLU_062974_2_2_6"/>
<dbReference type="Proteomes" id="UP000008936">
    <property type="component" value="Chromosome"/>
</dbReference>
<dbReference type="GO" id="GO:0005829">
    <property type="term" value="C:cytosol"/>
    <property type="evidence" value="ECO:0007669"/>
    <property type="project" value="TreeGrafter"/>
</dbReference>
<dbReference type="GO" id="GO:0003677">
    <property type="term" value="F:DNA binding"/>
    <property type="evidence" value="ECO:0007669"/>
    <property type="project" value="UniProtKB-UniRule"/>
</dbReference>
<dbReference type="GO" id="GO:0006355">
    <property type="term" value="P:regulation of DNA-templated transcription"/>
    <property type="evidence" value="ECO:0007669"/>
    <property type="project" value="UniProtKB-UniRule"/>
</dbReference>
<dbReference type="FunFam" id="1.10.10.200:FF:000001">
    <property type="entry name" value="Probable transcriptional regulatory protein YebC"/>
    <property type="match status" value="1"/>
</dbReference>
<dbReference type="FunFam" id="3.30.70.980:FF:000002">
    <property type="entry name" value="Probable transcriptional regulatory protein YebC"/>
    <property type="match status" value="1"/>
</dbReference>
<dbReference type="Gene3D" id="1.10.10.200">
    <property type="match status" value="1"/>
</dbReference>
<dbReference type="Gene3D" id="3.30.70.980">
    <property type="match status" value="2"/>
</dbReference>
<dbReference type="HAMAP" id="MF_00693">
    <property type="entry name" value="Transcrip_reg_TACO1"/>
    <property type="match status" value="1"/>
</dbReference>
<dbReference type="InterPro" id="IPR017856">
    <property type="entry name" value="Integrase-like_N"/>
</dbReference>
<dbReference type="InterPro" id="IPR048300">
    <property type="entry name" value="TACO1_YebC-like_2nd/3rd_dom"/>
</dbReference>
<dbReference type="InterPro" id="IPR049083">
    <property type="entry name" value="TACO1_YebC_N"/>
</dbReference>
<dbReference type="InterPro" id="IPR002876">
    <property type="entry name" value="Transcrip_reg_TACO1-like"/>
</dbReference>
<dbReference type="InterPro" id="IPR026564">
    <property type="entry name" value="Transcrip_reg_TACO1-like_dom3"/>
</dbReference>
<dbReference type="InterPro" id="IPR029072">
    <property type="entry name" value="YebC-like"/>
</dbReference>
<dbReference type="NCBIfam" id="NF001030">
    <property type="entry name" value="PRK00110.1"/>
    <property type="match status" value="1"/>
</dbReference>
<dbReference type="NCBIfam" id="NF009044">
    <property type="entry name" value="PRK12378.1"/>
    <property type="match status" value="1"/>
</dbReference>
<dbReference type="NCBIfam" id="TIGR01033">
    <property type="entry name" value="YebC/PmpR family DNA-binding transcriptional regulator"/>
    <property type="match status" value="1"/>
</dbReference>
<dbReference type="PANTHER" id="PTHR12532:SF6">
    <property type="entry name" value="TRANSCRIPTIONAL REGULATORY PROTEIN YEBC-RELATED"/>
    <property type="match status" value="1"/>
</dbReference>
<dbReference type="PANTHER" id="PTHR12532">
    <property type="entry name" value="TRANSLATIONAL ACTIVATOR OF CYTOCHROME C OXIDASE 1"/>
    <property type="match status" value="1"/>
</dbReference>
<dbReference type="Pfam" id="PF20772">
    <property type="entry name" value="TACO1_YebC_N"/>
    <property type="match status" value="1"/>
</dbReference>
<dbReference type="Pfam" id="PF01709">
    <property type="entry name" value="Transcrip_reg"/>
    <property type="match status" value="1"/>
</dbReference>
<dbReference type="SUPFAM" id="SSF75625">
    <property type="entry name" value="YebC-like"/>
    <property type="match status" value="1"/>
</dbReference>
<proteinExistence type="inferred from homology"/>
<accession>Q1CJG8</accession>
<accession>C4GSF8</accession>
<gene>
    <name type="ordered locus">YPN_1532</name>
    <name type="ORF">YP516_1700</name>
</gene>